<accession>Q3YAT3</accession>
<evidence type="ECO:0000250" key="1">
    <source>
        <dbReference type="UniProtKB" id="M1VMF7"/>
    </source>
</evidence>
<evidence type="ECO:0000269" key="2">
    <source>
    </source>
</evidence>
<evidence type="ECO:0000303" key="3">
    <source>
    </source>
</evidence>
<evidence type="ECO:0000305" key="4"/>
<comment type="function">
    <text evidence="2">Involved in the degradation of methyl tert-butyl ether (MTBE). Catalyzes the conversion of 2-methyl 1,2-propanediol (2-M1,2-PD) to hydroxyisobutyraldehyde.</text>
</comment>
<comment type="catalytic activity">
    <reaction evidence="2">
        <text>2-methylpropane-1,2-diol + NAD(+) = 2-hydroxy-2-methylpropanal + NADH + H(+)</text>
        <dbReference type="Rhea" id="RHEA:23552"/>
        <dbReference type="ChEBI" id="CHEBI:15378"/>
        <dbReference type="ChEBI" id="CHEBI:57540"/>
        <dbReference type="ChEBI" id="CHEBI:57945"/>
        <dbReference type="ChEBI" id="CHEBI:131845"/>
        <dbReference type="ChEBI" id="CHEBI:131846"/>
        <dbReference type="EC" id="1.1.1.400"/>
    </reaction>
</comment>
<comment type="cofactor">
    <cofactor evidence="1">
        <name>FAD</name>
        <dbReference type="ChEBI" id="CHEBI:57692"/>
    </cofactor>
</comment>
<comment type="subcellular location">
    <subcellularLocation>
        <location evidence="2">Cytoplasm</location>
    </subcellularLocation>
</comment>
<comment type="induction">
    <text evidence="2">Induced in the presence of MTBE or tert-butyl alcohol (TBA).</text>
</comment>
<comment type="similarity">
    <text evidence="4">Belongs to the GMC oxidoreductase family.</text>
</comment>
<feature type="chain" id="PRO_0000447200" description="2-methyl-1,2-propanediol dehydrogenase">
    <location>
        <begin position="1"/>
        <end position="552"/>
    </location>
</feature>
<feature type="sequence conflict" description="In Ref. 1; AA sequence." evidence="4" ref="1">
    <original>G</original>
    <variation>S</variation>
    <location>
        <position position="111"/>
    </location>
</feature>
<name>MPDB_MYCAO</name>
<organism>
    <name type="scientific">Mycolicibacterium austroafricanum</name>
    <name type="common">Mycobacterium austroafricanum</name>
    <dbReference type="NCBI Taxonomy" id="39687"/>
    <lineage>
        <taxon>Bacteria</taxon>
        <taxon>Bacillati</taxon>
        <taxon>Actinomycetota</taxon>
        <taxon>Actinomycetes</taxon>
        <taxon>Mycobacteriales</taxon>
        <taxon>Mycobacteriaceae</taxon>
        <taxon>Mycolicibacterium</taxon>
    </lineage>
</organism>
<reference key="1">
    <citation type="journal article" date="2006" name="Microbiology">
        <title>Genes involved in the methyl tert-butyl ether (MTBE) metabolic pathway of Mycobacterium austroafricanum IFP 2012.</title>
        <authorList>
            <person name="Lopes Ferreira N."/>
            <person name="Labbe D."/>
            <person name="Monot F."/>
            <person name="Fayolle-Guichard F."/>
            <person name="Greer C.W."/>
        </authorList>
    </citation>
    <scope>NUCLEOTIDE SEQUENCE [GENOMIC DNA]</scope>
    <scope>PROTEIN SEQUENCE OF 1-14; 58-73 AND 111-140</scope>
    <scope>FUNCTION</scope>
    <scope>CATALYTIC ACTIVITY</scope>
    <scope>SUBCELLULAR LOCATION</scope>
    <scope>INDUCTION</scope>
    <source>
        <strain>IFP 2012</strain>
    </source>
</reference>
<proteinExistence type="evidence at protein level"/>
<protein>
    <recommendedName>
        <fullName evidence="4">2-methyl-1,2-propanediol dehydrogenase</fullName>
        <shortName evidence="3">2-M1,2-PD dehydrogenase</shortName>
        <ecNumber evidence="2">1.1.1.400</ecNumber>
    </recommendedName>
</protein>
<keyword id="KW-0963">Cytoplasm</keyword>
<keyword id="KW-0903">Direct protein sequencing</keyword>
<keyword id="KW-0274">FAD</keyword>
<keyword id="KW-0285">Flavoprotein</keyword>
<keyword id="KW-0560">Oxidoreductase</keyword>
<dbReference type="EC" id="1.1.1.400" evidence="2"/>
<dbReference type="EMBL" id="DQ147773">
    <property type="protein sequence ID" value="AAZ78237.1"/>
    <property type="molecule type" value="Genomic_DNA"/>
</dbReference>
<dbReference type="SMR" id="Q3YAT3"/>
<dbReference type="KEGG" id="ag:AAZ78237"/>
<dbReference type="BioCyc" id="MetaCyc:MONOMER-19853"/>
<dbReference type="GO" id="GO:0005737">
    <property type="term" value="C:cytoplasm"/>
    <property type="evidence" value="ECO:0007669"/>
    <property type="project" value="UniProtKB-SubCell"/>
</dbReference>
<dbReference type="GO" id="GO:0050660">
    <property type="term" value="F:flavin adenine dinucleotide binding"/>
    <property type="evidence" value="ECO:0007669"/>
    <property type="project" value="InterPro"/>
</dbReference>
<dbReference type="GO" id="GO:0016614">
    <property type="term" value="F:oxidoreductase activity, acting on CH-OH group of donors"/>
    <property type="evidence" value="ECO:0007669"/>
    <property type="project" value="InterPro"/>
</dbReference>
<dbReference type="Gene3D" id="3.50.50.60">
    <property type="entry name" value="FAD/NAD(P)-binding domain"/>
    <property type="match status" value="2"/>
</dbReference>
<dbReference type="InterPro" id="IPR036188">
    <property type="entry name" value="FAD/NAD-bd_sf"/>
</dbReference>
<dbReference type="InterPro" id="IPR000172">
    <property type="entry name" value="GMC_OxRdtase_N"/>
</dbReference>
<dbReference type="InterPro" id="IPR007867">
    <property type="entry name" value="GMC_OxRtase_C"/>
</dbReference>
<dbReference type="InterPro" id="IPR051473">
    <property type="entry name" value="P2Ox-like"/>
</dbReference>
<dbReference type="PANTHER" id="PTHR42784">
    <property type="entry name" value="PYRANOSE 2-OXIDASE"/>
    <property type="match status" value="1"/>
</dbReference>
<dbReference type="PANTHER" id="PTHR42784:SF1">
    <property type="entry name" value="PYRANOSE 2-OXIDASE"/>
    <property type="match status" value="1"/>
</dbReference>
<dbReference type="Pfam" id="PF05199">
    <property type="entry name" value="GMC_oxred_C"/>
    <property type="match status" value="1"/>
</dbReference>
<dbReference type="Pfam" id="PF00732">
    <property type="entry name" value="GMC_oxred_N"/>
    <property type="match status" value="1"/>
</dbReference>
<dbReference type="SUPFAM" id="SSF54373">
    <property type="entry name" value="FAD-linked reductases, C-terminal domain"/>
    <property type="match status" value="1"/>
</dbReference>
<dbReference type="SUPFAM" id="SSF51905">
    <property type="entry name" value="FAD/NAD(P)-binding domain"/>
    <property type="match status" value="1"/>
</dbReference>
<gene>
    <name evidence="3" type="primary">mpdB</name>
</gene>
<sequence>MTTSADQTDVLVIGSGPGGAGVTLKLVQAGYKVTCLEQGPWVTPPEHPHYHREWEIEKQRGWAYDPNVRGLPEDYPVTGFTTPYLMNNVGGSTMHYAGHWPRYKPVDFRKGTEHGLEGTIDWPISYEELAPYYDENDAIYGISGMVGDPSYPDRTGVDRDPPVKPGKLGRNFAQALGDLGWHWWPSDNAIITRPREGREADIAAGNELSGSPTGSLSTPTHTHWPTAIALGADLRTHARVEQIHTKNGKATGATYIDTRTGARHEINAKIVVVSASGIGTPRLLLMSAQKGHPDGLANSNGLVGKYLMHHILRVLASVVRTSRMEGYKGAFGAPLYSHEFYHTDTNRGFVNGFGMQVARSFGAAYTAMGSHTGYVAPWGKSHRKFFNEHFGNHLMVFMFGEDLPVETNCVTLDPDAKDSSGLPAARVNWEPHENDIALANYGIDRIFEAARALGAVETNDTGVLNPPPGWHLMGTCRMGNNPEDSVTNKWHQTWDVPNLFVVDGSSLTTGGAVNPTSTIGALAVRAGDYISRRFSDIVDQRTTPSNEDAPAI</sequence>